<evidence type="ECO:0000255" key="1">
    <source>
        <dbReference type="HAMAP-Rule" id="MF_01266"/>
    </source>
</evidence>
<dbReference type="EC" id="3.1.1.-" evidence="1"/>
<dbReference type="EMBL" id="CP001164">
    <property type="protein sequence ID" value="ACI38078.1"/>
    <property type="molecule type" value="Genomic_DNA"/>
</dbReference>
<dbReference type="RefSeq" id="WP_001295191.1">
    <property type="nucleotide sequence ID" value="NC_011353.1"/>
</dbReference>
<dbReference type="SMR" id="B5Z2J8"/>
<dbReference type="GeneID" id="93777632"/>
<dbReference type="KEGG" id="ecf:ECH74115_5708"/>
<dbReference type="HOGENOM" id="CLU_074775_0_0_6"/>
<dbReference type="UniPathway" id="UPA00263">
    <property type="reaction ID" value="UER00377"/>
</dbReference>
<dbReference type="GO" id="GO:0005737">
    <property type="term" value="C:cytoplasm"/>
    <property type="evidence" value="ECO:0007669"/>
    <property type="project" value="UniProtKB-SubCell"/>
</dbReference>
<dbReference type="GO" id="GO:0035460">
    <property type="term" value="F:L-ascorbate 6-phosphate lactonase activity"/>
    <property type="evidence" value="ECO:0007669"/>
    <property type="project" value="InterPro"/>
</dbReference>
<dbReference type="GO" id="GO:0030145">
    <property type="term" value="F:manganese ion binding"/>
    <property type="evidence" value="ECO:0007669"/>
    <property type="project" value="InterPro"/>
</dbReference>
<dbReference type="GO" id="GO:0019854">
    <property type="term" value="P:L-ascorbic acid catabolic process"/>
    <property type="evidence" value="ECO:0007669"/>
    <property type="project" value="UniProtKB-UniRule"/>
</dbReference>
<dbReference type="CDD" id="cd16284">
    <property type="entry name" value="UlaG-like_MBL-fold"/>
    <property type="match status" value="1"/>
</dbReference>
<dbReference type="FunFam" id="3.60.15.10:FF:000004">
    <property type="entry name" value="Probable L-ascorbate-6-phosphate lactonase UlaG"/>
    <property type="match status" value="1"/>
</dbReference>
<dbReference type="Gene3D" id="3.60.15.10">
    <property type="entry name" value="Ribonuclease Z/Hydroxyacylglutathione hydrolase-like"/>
    <property type="match status" value="1"/>
</dbReference>
<dbReference type="HAMAP" id="MF_01266">
    <property type="entry name" value="UlaG"/>
    <property type="match status" value="1"/>
</dbReference>
<dbReference type="InterPro" id="IPR023951">
    <property type="entry name" value="L-ascorbate_6P_UlaG"/>
</dbReference>
<dbReference type="InterPro" id="IPR001279">
    <property type="entry name" value="Metallo-B-lactamas"/>
</dbReference>
<dbReference type="InterPro" id="IPR036866">
    <property type="entry name" value="RibonucZ/Hydroxyglut_hydro"/>
</dbReference>
<dbReference type="InterPro" id="IPR048021">
    <property type="entry name" value="UlaG-like_MBL-fold"/>
</dbReference>
<dbReference type="InterPro" id="IPR050114">
    <property type="entry name" value="UPF0173_UPF0282_UlaG_hydrolase"/>
</dbReference>
<dbReference type="NCBIfam" id="NF008688">
    <property type="entry name" value="PRK11709.1"/>
    <property type="match status" value="1"/>
</dbReference>
<dbReference type="PANTHER" id="PTHR43546:SF9">
    <property type="entry name" value="L-ASCORBATE-6-PHOSPHATE LACTONASE ULAG-RELATED"/>
    <property type="match status" value="1"/>
</dbReference>
<dbReference type="PANTHER" id="PTHR43546">
    <property type="entry name" value="UPF0173 METAL-DEPENDENT HYDROLASE MJ1163-RELATED"/>
    <property type="match status" value="1"/>
</dbReference>
<dbReference type="Pfam" id="PF12706">
    <property type="entry name" value="Lactamase_B_2"/>
    <property type="match status" value="1"/>
</dbReference>
<dbReference type="SUPFAM" id="SSF56281">
    <property type="entry name" value="Metallo-hydrolase/oxidoreductase"/>
    <property type="match status" value="1"/>
</dbReference>
<name>ULAG_ECO5E</name>
<feature type="chain" id="PRO_1000140092" description="Probable L-ascorbate-6-phosphate lactonase UlaG">
    <location>
        <begin position="1"/>
        <end position="354"/>
    </location>
</feature>
<accession>B5Z2J8</accession>
<keyword id="KW-0963">Cytoplasm</keyword>
<keyword id="KW-0378">Hydrolase</keyword>
<sequence>MSKVKSITRESWILSTFPEWGSWLNEEIEQEQVAPGTFAMWWLGCTGIWLKSEGGTNVCVDFWCGTGKQSHGNPLMKQGHQMQRMAGVKKLQPNLRTTPFVLDPFAIRQIDAVLATHDHNDHIDVNVAAAVMQNCADDVPFIGPKTCVDLWIGWGVPKERCIVVKPGDVVKVKDIEIHALDAFDRTALITLPADQKAAGVLPDGMDDRAVNYLFKTPGGSLYHSGDSHYSNYYAKHGNEHQIDVALGSYGENPRGITDKMTSADMLRMGEALNAKVVIPFHHDIWSNFQADPQEIRVLWEMKKDRLKYGFKPFIWQVGGKFTWPLDKDNFEYHYPRGFDDCFTIEPDLPFKSFL</sequence>
<organism>
    <name type="scientific">Escherichia coli O157:H7 (strain EC4115 / EHEC)</name>
    <dbReference type="NCBI Taxonomy" id="444450"/>
    <lineage>
        <taxon>Bacteria</taxon>
        <taxon>Pseudomonadati</taxon>
        <taxon>Pseudomonadota</taxon>
        <taxon>Gammaproteobacteria</taxon>
        <taxon>Enterobacterales</taxon>
        <taxon>Enterobacteriaceae</taxon>
        <taxon>Escherichia</taxon>
    </lineage>
</organism>
<protein>
    <recommendedName>
        <fullName evidence="1">Probable L-ascorbate-6-phosphate lactonase UlaG</fullName>
        <ecNumber evidence="1">3.1.1.-</ecNumber>
    </recommendedName>
    <alternativeName>
        <fullName evidence="1">L-ascorbate utilization protein G</fullName>
    </alternativeName>
</protein>
<proteinExistence type="inferred from homology"/>
<comment type="function">
    <text evidence="1">Probably catalyzes the hydrolysis of L-ascorbate-6-P into 3-keto-L-gulonate-6-P. Is essential for L-ascorbate utilization under anaerobic conditions.</text>
</comment>
<comment type="catalytic activity">
    <reaction evidence="1">
        <text>L-ascorbate 6-phosphate + H2O = 3-dehydro-L-gulonate 6-phosphate</text>
        <dbReference type="Rhea" id="RHEA:28803"/>
        <dbReference type="ChEBI" id="CHEBI:15377"/>
        <dbReference type="ChEBI" id="CHEBI:58774"/>
        <dbReference type="ChEBI" id="CHEBI:61698"/>
    </reaction>
</comment>
<comment type="cofactor">
    <cofactor evidence="1">
        <name>a divalent metal cation</name>
        <dbReference type="ChEBI" id="CHEBI:60240"/>
    </cofactor>
</comment>
<comment type="pathway">
    <text evidence="1">Cofactor degradation; L-ascorbate degradation; D-xylulose 5-phosphate from L-ascorbate: step 1/4.</text>
</comment>
<comment type="subcellular location">
    <subcellularLocation>
        <location evidence="1">Cytoplasm</location>
    </subcellularLocation>
</comment>
<comment type="induction">
    <text evidence="1">Induced by L-ascorbate. Repressed by UlaR.</text>
</comment>
<comment type="similarity">
    <text evidence="1">Belongs to the UlaG family.</text>
</comment>
<reference key="1">
    <citation type="journal article" date="2011" name="Proc. Natl. Acad. Sci. U.S.A.">
        <title>Genomic anatomy of Escherichia coli O157:H7 outbreaks.</title>
        <authorList>
            <person name="Eppinger M."/>
            <person name="Mammel M.K."/>
            <person name="Leclerc J.E."/>
            <person name="Ravel J."/>
            <person name="Cebula T.A."/>
        </authorList>
    </citation>
    <scope>NUCLEOTIDE SEQUENCE [LARGE SCALE GENOMIC DNA]</scope>
    <source>
        <strain>EC4115 / EHEC</strain>
    </source>
</reference>
<gene>
    <name evidence="1" type="primary">ulaG</name>
    <name type="ordered locus">ECH74115_5708</name>
</gene>